<proteinExistence type="evidence at protein level"/>
<keyword id="KW-0002">3D-structure</keyword>
<keyword id="KW-0007">Acetylation</keyword>
<keyword id="KW-0160">Chromosomal rearrangement</keyword>
<keyword id="KW-0539">Nucleus</keyword>
<keyword id="KW-0597">Phosphoprotein</keyword>
<keyword id="KW-1267">Proteomics identification</keyword>
<keyword id="KW-0656">Proto-oncogene</keyword>
<keyword id="KW-1185">Reference proteome</keyword>
<keyword id="KW-0804">Transcription</keyword>
<keyword id="KW-0805">Transcription regulation</keyword>
<reference key="1">
    <citation type="journal article" date="1994" name="Proc. Natl. Acad. Sci. U.S.A.">
        <title>Cloning of ELL, a gene that fuses to MLL in a t(11;19)(q23;p13.1) in acute myeloid leukemia.</title>
        <authorList>
            <person name="Thirman M.J."/>
            <person name="Levitan D.A."/>
            <person name="Kobayashi H."/>
            <person name="Simon M.C."/>
            <person name="Rowley J.D."/>
        </authorList>
    </citation>
    <scope>NUCLEOTIDE SEQUENCE [MRNA]</scope>
    <scope>CHROMOSOMAL TRANSLOCATION</scope>
    <source>
        <tissue>Fetal brain</tissue>
    </source>
</reference>
<reference key="2">
    <citation type="journal article" date="2004" name="Genome Res.">
        <title>The status, quality, and expansion of the NIH full-length cDNA project: the Mammalian Gene Collection (MGC).</title>
        <authorList>
            <consortium name="The MGC Project Team"/>
        </authorList>
    </citation>
    <scope>NUCLEOTIDE SEQUENCE [LARGE SCALE MRNA]</scope>
    <source>
        <tissue>Brain</tissue>
    </source>
</reference>
<reference key="3">
    <citation type="journal article" date="1996" name="Science">
        <title>An RNA polymerase II elongation factor encoded by the human ELL gene.</title>
        <authorList>
            <person name="Shilatifard A."/>
            <person name="Lane W.S."/>
            <person name="Jackson K.W."/>
            <person name="Conaway R.C."/>
            <person name="Conaway J.W."/>
        </authorList>
    </citation>
    <scope>FUNCTION IN TRANSCRIPTION ELONGATION</scope>
</reference>
<reference key="4">
    <citation type="journal article" date="2001" name="Blood">
        <title>EAF1, a novel ELL-associated factor that is delocalized by expression of the MLL-ELL fusion protein.</title>
        <authorList>
            <person name="Simone F."/>
            <person name="Polak P.E."/>
            <person name="Kaberlein J.J."/>
            <person name="Luo R.T."/>
            <person name="Levitan D.A."/>
            <person name="Thirman M.J."/>
        </authorList>
    </citation>
    <scope>INTERACTION WITH EAF1</scope>
    <scope>SUBCELLULAR LOCATION</scope>
</reference>
<reference key="5">
    <citation type="journal article" date="2003" name="Blood">
        <title>ELL-associated factor 2 (EAF2), a functional homolog of EAF1 with alternative ELL binding properties.</title>
        <authorList>
            <person name="Simone F."/>
            <person name="Luo R.T."/>
            <person name="Polak P.E."/>
            <person name="Kaberlein J.J."/>
            <person name="Thirman M.J."/>
        </authorList>
    </citation>
    <scope>INTERACTION WITH EAF2</scope>
    <scope>SUBCELLULAR LOCATION</scope>
</reference>
<reference key="6">
    <citation type="journal article" date="2003" name="Mol. Biol. Cell">
        <title>ELL and EAF1 are Cajal body components that are disrupted in MLL-ELL leukemia.</title>
        <authorList>
            <person name="Polak P.E."/>
            <person name="Simone F."/>
            <person name="Kaberlein J.J."/>
            <person name="Luo R.T."/>
            <person name="Thirman M.J."/>
        </authorList>
    </citation>
    <scope>SUBCELLULAR LOCATION</scope>
</reference>
<reference key="7">
    <citation type="journal article" date="2005" name="Proc. Natl. Acad. Sci. U.S.A.">
        <title>ELL-associated factors 1 and 2 are positive regulators of RNA polymerase II elongation factor ELL.</title>
        <authorList>
            <person name="Kong S.E."/>
            <person name="Banks C.A."/>
            <person name="Shilatifard A."/>
            <person name="Conaway J.W."/>
            <person name="Conaway R.C."/>
        </authorList>
    </citation>
    <scope>FUNCTION IN TRANSCRIPTION</scope>
</reference>
<reference key="8">
    <citation type="journal article" date="2007" name="Science">
        <title>ATM and ATR substrate analysis reveals extensive protein networks responsive to DNA damage.</title>
        <authorList>
            <person name="Matsuoka S."/>
            <person name="Ballif B.A."/>
            <person name="Smogorzewska A."/>
            <person name="McDonald E.R. III"/>
            <person name="Hurov K.E."/>
            <person name="Luo J."/>
            <person name="Bakalarski C.E."/>
            <person name="Zhao Z."/>
            <person name="Solimini N."/>
            <person name="Lerenthal Y."/>
            <person name="Shiloh Y."/>
            <person name="Gygi S.P."/>
            <person name="Elledge S.J."/>
        </authorList>
    </citation>
    <scope>PHOSPHORYLATION [LARGE SCALE ANALYSIS] AT SER-561</scope>
    <scope>IDENTIFICATION BY MASS SPECTROMETRY [LARGE SCALE ANALYSIS]</scope>
    <source>
        <tissue>Embryonic kidney</tissue>
    </source>
</reference>
<reference key="9">
    <citation type="journal article" date="2008" name="Proc. Natl. Acad. Sci. U.S.A.">
        <title>A quantitative atlas of mitotic phosphorylation.</title>
        <authorList>
            <person name="Dephoure N."/>
            <person name="Zhou C."/>
            <person name="Villen J."/>
            <person name="Beausoleil S.A."/>
            <person name="Bakalarski C.E."/>
            <person name="Elledge S.J."/>
            <person name="Gygi S.P."/>
        </authorList>
    </citation>
    <scope>PHOSPHORYLATION [LARGE SCALE ANALYSIS] AT SER-309</scope>
    <scope>IDENTIFICATION BY MASS SPECTROMETRY [LARGE SCALE ANALYSIS]</scope>
    <source>
        <tissue>Cervix carcinoma</tissue>
    </source>
</reference>
<reference key="10">
    <citation type="journal article" date="2010" name="Mol. Cell">
        <title>HIV-1 Tat and host AFF4 recruit two transcription elongation factors into a bifunctional complex for coordinated activation of HIV-1 transcription.</title>
        <authorList>
            <person name="He N."/>
            <person name="Liu M."/>
            <person name="Hsu J."/>
            <person name="Xue Y."/>
            <person name="Chou S."/>
            <person name="Burlingame A."/>
            <person name="Krogan N.J."/>
            <person name="Alber T."/>
            <person name="Zhou Q."/>
        </authorList>
    </citation>
    <scope>FUNCTION</scope>
    <scope>IDENTIFICATION IN THE SEC COMPLEX</scope>
</reference>
<reference key="11">
    <citation type="journal article" date="2010" name="Mol. Cell">
        <title>AFF4, a component of the ELL/P-TEFb elongation complex and a shared subunit of MLL chimeras, can link transcription elongation to leukemia.</title>
        <authorList>
            <person name="Lin C."/>
            <person name="Smith E.R."/>
            <person name="Takahashi H."/>
            <person name="Lai K.C."/>
            <person name="Martin-Brown S."/>
            <person name="Florens L."/>
            <person name="Washburn M.P."/>
            <person name="Conaway J.W."/>
            <person name="Conaway R.C."/>
            <person name="Shilatifard A."/>
        </authorList>
    </citation>
    <scope>FUNCTION</scope>
    <scope>IDENTIFICATION IN THE SEC COMPLEX</scope>
</reference>
<reference key="12">
    <citation type="journal article" date="2010" name="Sci. Signal.">
        <title>Quantitative phosphoproteomics reveals widespread full phosphorylation site occupancy during mitosis.</title>
        <authorList>
            <person name="Olsen J.V."/>
            <person name="Vermeulen M."/>
            <person name="Santamaria A."/>
            <person name="Kumar C."/>
            <person name="Miller M.L."/>
            <person name="Jensen L.J."/>
            <person name="Gnad F."/>
            <person name="Cox J."/>
            <person name="Jensen T.S."/>
            <person name="Nigg E.A."/>
            <person name="Brunak S."/>
            <person name="Mann M."/>
        </authorList>
    </citation>
    <scope>PHOSPHORYLATION [LARGE SCALE ANALYSIS] AT SER-309</scope>
    <scope>IDENTIFICATION BY MASS SPECTROMETRY [LARGE SCALE ANALYSIS]</scope>
    <source>
        <tissue>Cervix carcinoma</tissue>
    </source>
</reference>
<reference key="13">
    <citation type="journal article" date="2011" name="Mol. Cell">
        <title>The little elongation complex regulates small nuclear RNA transcription.</title>
        <authorList>
            <person name="Smith E.R."/>
            <person name="Lin C."/>
            <person name="Garrett A.S."/>
            <person name="Thornton J."/>
            <person name="Mohaghegh N."/>
            <person name="Hu D."/>
            <person name="Jackson J."/>
            <person name="Saraf A."/>
            <person name="Swanson S.K."/>
            <person name="Seidel C."/>
            <person name="Florens L."/>
            <person name="Washburn M.P."/>
            <person name="Eissenberg J.C."/>
            <person name="Shilatifard A."/>
        </authorList>
    </citation>
    <scope>FUNCTION</scope>
    <scope>SUBCELLULAR LOCATION</scope>
    <scope>IDENTIFICATION IN THE SEC COMPLEX</scope>
    <scope>IDENTIFICATION IN THE LEC COMPLEX</scope>
    <scope>INTERACTION WITH ICE1 AND ICE2</scope>
</reference>
<reference key="14">
    <citation type="journal article" date="2012" name="Nat. Commun.">
        <title>ELL facilitates RNA polymerase II pause site entry and release.</title>
        <authorList>
            <person name="Byun J.S."/>
            <person name="Fufa T.D."/>
            <person name="Wakano C."/>
            <person name="Fernandez A."/>
            <person name="Haggerty C.M."/>
            <person name="Sung M.H."/>
            <person name="Gardner K."/>
        </authorList>
    </citation>
    <scope>FUNCTION</scope>
</reference>
<reference key="15">
    <citation type="journal article" date="2012" name="Nat. Rev. Mol. Cell Biol.">
        <title>The super elongation complex (SEC) family in transcriptional control.</title>
        <authorList>
            <person name="Luo Z."/>
            <person name="Lin C."/>
            <person name="Shilatifard A."/>
        </authorList>
    </citation>
    <scope>REVIEW ON THE SUPER ELONGATION COMPLEX</scope>
</reference>
<reference key="16">
    <citation type="journal article" date="2012" name="Proc. Natl. Acad. Sci. U.S.A.">
        <title>N-terminal acetylome analyses and functional insights of the N-terminal acetyltransferase NatB.</title>
        <authorList>
            <person name="Van Damme P."/>
            <person name="Lasa M."/>
            <person name="Polevoda B."/>
            <person name="Gazquez C."/>
            <person name="Elosegui-Artola A."/>
            <person name="Kim D.S."/>
            <person name="De Juan-Pardo E."/>
            <person name="Demeyer K."/>
            <person name="Hole K."/>
            <person name="Larrea E."/>
            <person name="Timmerman E."/>
            <person name="Prieto J."/>
            <person name="Arnesen T."/>
            <person name="Sherman F."/>
            <person name="Gevaert K."/>
            <person name="Aldabe R."/>
        </authorList>
    </citation>
    <scope>ACETYLATION [LARGE SCALE ANALYSIS] AT ALA-2</scope>
    <scope>CLEAVAGE OF INITIATOR METHIONINE [LARGE SCALE ANALYSIS]</scope>
    <scope>IDENTIFICATION BY MASS SPECTROMETRY [LARGE SCALE ANALYSIS]</scope>
</reference>
<reference key="17">
    <citation type="journal article" date="2013" name="J. Proteome Res.">
        <title>Toward a comprehensive characterization of a human cancer cell phosphoproteome.</title>
        <authorList>
            <person name="Zhou H."/>
            <person name="Di Palma S."/>
            <person name="Preisinger C."/>
            <person name="Peng M."/>
            <person name="Polat A.N."/>
            <person name="Heck A.J."/>
            <person name="Mohammed S."/>
        </authorList>
    </citation>
    <scope>PHOSPHORYLATION [LARGE SCALE ANALYSIS] AT THR-180 AND SER-309</scope>
    <scope>IDENTIFICATION BY MASS SPECTROMETRY [LARGE SCALE ANALYSIS]</scope>
    <source>
        <tissue>Cervix carcinoma</tissue>
        <tissue>Erythroleukemia</tissue>
    </source>
</reference>
<reference key="18">
    <citation type="journal article" date="2013" name="Mol. Cell">
        <title>The little elongation complex functions at initiation and elongation phases of snRNA gene transcription.</title>
        <authorList>
            <person name="Hu D."/>
            <person name="Smith E.R."/>
            <person name="Garruss A.S."/>
            <person name="Mohaghegh N."/>
            <person name="Varberg J.M."/>
            <person name="Lin C."/>
            <person name="Jackson J."/>
            <person name="Gao X."/>
            <person name="Saraf A."/>
            <person name="Florens L."/>
            <person name="Washburn M.P."/>
            <person name="Eissenberg J.C."/>
            <person name="Shilatifard A."/>
        </authorList>
    </citation>
    <scope>FUNCTION</scope>
    <scope>SUBCELLULAR LOCATION</scope>
    <scope>IDENTIFICATION IN THE LEC COMPLEX</scope>
    <scope>INTERACTION WITH ICE1</scope>
</reference>
<reference key="19">
    <citation type="journal article" date="2014" name="J. Cell Sci.">
        <title>A role for the Cajal-body-associated SUMO isopeptidase USPL1 in snRNA transcription mediated by RNA polymerase II.</title>
        <authorList>
            <person name="Hutten S."/>
            <person name="Chachami G."/>
            <person name="Winter U."/>
            <person name="Melchior F."/>
            <person name="Lamond A.I."/>
        </authorList>
    </citation>
    <scope>INTERACTION WITH USPL1</scope>
</reference>
<reference key="20">
    <citation type="submission" date="2007-05" db="PDB data bank">
        <title>Solution structure of the helical domain in human eleven-nineteen lysine-rich leukemia protein ELL.</title>
        <authorList>
            <consortium name="RIKEN structural genomics initiative (RSGI)"/>
        </authorList>
    </citation>
    <scope>STRUCTURE BY NMR OF 197-297</scope>
</reference>
<feature type="initiator methionine" description="Removed" evidence="20">
    <location>
        <position position="1"/>
    </location>
</feature>
<feature type="chain" id="PRO_0000146733" description="RNA polymerase II elongation factor ELL">
    <location>
        <begin position="2"/>
        <end position="621"/>
    </location>
</feature>
<feature type="domain" description="OCEL" evidence="2">
    <location>
        <begin position="507"/>
        <end position="617"/>
    </location>
</feature>
<feature type="region of interest" description="Disordered" evidence="3">
    <location>
        <begin position="296"/>
        <end position="417"/>
    </location>
</feature>
<feature type="region of interest" description="Disordered" evidence="3">
    <location>
        <begin position="431"/>
        <end position="504"/>
    </location>
</feature>
<feature type="short sequence motif" description="Nuclear localization signal" evidence="1">
    <location>
        <begin position="445"/>
        <end position="459"/>
    </location>
</feature>
<feature type="compositionally biased region" description="Polar residues" evidence="3">
    <location>
        <begin position="374"/>
        <end position="383"/>
    </location>
</feature>
<feature type="compositionally biased region" description="Basic and acidic residues" evidence="3">
    <location>
        <begin position="406"/>
        <end position="415"/>
    </location>
</feature>
<feature type="compositionally biased region" description="Low complexity" evidence="3">
    <location>
        <begin position="436"/>
        <end position="445"/>
    </location>
</feature>
<feature type="compositionally biased region" description="Basic residues" evidence="3">
    <location>
        <begin position="446"/>
        <end position="457"/>
    </location>
</feature>
<feature type="compositionally biased region" description="Basic and acidic residues" evidence="3">
    <location>
        <begin position="458"/>
        <end position="467"/>
    </location>
</feature>
<feature type="compositionally biased region" description="Low complexity" evidence="3">
    <location>
        <begin position="474"/>
        <end position="504"/>
    </location>
</feature>
<feature type="site" description="KMT2A/MLL1 fusion point (in acute myeloid leukemia patient)" evidence="14">
    <location>
        <position position="46"/>
    </location>
</feature>
<feature type="modified residue" description="N-acetylalanine" evidence="20">
    <location>
        <position position="2"/>
    </location>
</feature>
<feature type="modified residue" description="Phosphothreonine" evidence="21">
    <location>
        <position position="180"/>
    </location>
</feature>
<feature type="modified residue" description="Phosphoserine" evidence="18 19 21">
    <location>
        <position position="309"/>
    </location>
</feature>
<feature type="modified residue" description="Phosphoserine" evidence="17">
    <location>
        <position position="561"/>
    </location>
</feature>
<feature type="sequence variant" id="VAR_053072" description="In dbSNP:rs2303694.">
    <original>S</original>
    <variation>N</variation>
    <location>
        <position position="297"/>
    </location>
</feature>
<feature type="sequence variant" id="VAR_053073" description="In dbSNP:rs35245196.">
    <original>R</original>
    <variation>W</variation>
    <location>
        <position position="387"/>
    </location>
</feature>
<feature type="helix" evidence="22">
    <location>
        <begin position="207"/>
        <end position="217"/>
    </location>
</feature>
<feature type="helix" evidence="22">
    <location>
        <begin position="222"/>
        <end position="232"/>
    </location>
</feature>
<feature type="helix" evidence="22">
    <location>
        <begin position="236"/>
        <end position="248"/>
    </location>
</feature>
<feature type="strand" evidence="22">
    <location>
        <begin position="249"/>
        <end position="252"/>
    </location>
</feature>
<feature type="strand" evidence="22">
    <location>
        <begin position="254"/>
        <end position="256"/>
    </location>
</feature>
<feature type="strand" evidence="22">
    <location>
        <begin position="258"/>
        <end position="260"/>
    </location>
</feature>
<feature type="helix" evidence="22">
    <location>
        <begin position="265"/>
        <end position="268"/>
    </location>
</feature>
<feature type="helix" evidence="22">
    <location>
        <begin position="279"/>
        <end position="291"/>
    </location>
</feature>
<name>ELL_HUMAN</name>
<organism>
    <name type="scientific">Homo sapiens</name>
    <name type="common">Human</name>
    <dbReference type="NCBI Taxonomy" id="9606"/>
    <lineage>
        <taxon>Eukaryota</taxon>
        <taxon>Metazoa</taxon>
        <taxon>Chordata</taxon>
        <taxon>Craniata</taxon>
        <taxon>Vertebrata</taxon>
        <taxon>Euteleostomi</taxon>
        <taxon>Mammalia</taxon>
        <taxon>Eutheria</taxon>
        <taxon>Euarchontoglires</taxon>
        <taxon>Primates</taxon>
        <taxon>Haplorrhini</taxon>
        <taxon>Catarrhini</taxon>
        <taxon>Hominidae</taxon>
        <taxon>Homo</taxon>
    </lineage>
</organism>
<evidence type="ECO:0000255" key="1"/>
<evidence type="ECO:0000255" key="2">
    <source>
        <dbReference type="PROSITE-ProRule" id="PRU01324"/>
    </source>
</evidence>
<evidence type="ECO:0000256" key="3">
    <source>
        <dbReference type="SAM" id="MobiDB-lite"/>
    </source>
</evidence>
<evidence type="ECO:0000269" key="4">
    <source>
    </source>
</evidence>
<evidence type="ECO:0000269" key="5">
    <source>
    </source>
</evidence>
<evidence type="ECO:0000269" key="6">
    <source>
    </source>
</evidence>
<evidence type="ECO:0000269" key="7">
    <source>
    </source>
</evidence>
<evidence type="ECO:0000269" key="8">
    <source>
    </source>
</evidence>
<evidence type="ECO:0000269" key="9">
    <source>
    </source>
</evidence>
<evidence type="ECO:0000269" key="10">
    <source>
    </source>
</evidence>
<evidence type="ECO:0000269" key="11">
    <source>
    </source>
</evidence>
<evidence type="ECO:0000269" key="12">
    <source>
    </source>
</evidence>
<evidence type="ECO:0000269" key="13">
    <source>
    </source>
</evidence>
<evidence type="ECO:0000269" key="14">
    <source>
    </source>
</evidence>
<evidence type="ECO:0000269" key="15">
    <source>
    </source>
</evidence>
<evidence type="ECO:0000305" key="16"/>
<evidence type="ECO:0007744" key="17">
    <source>
    </source>
</evidence>
<evidence type="ECO:0007744" key="18">
    <source>
    </source>
</evidence>
<evidence type="ECO:0007744" key="19">
    <source>
    </source>
</evidence>
<evidence type="ECO:0007744" key="20">
    <source>
    </source>
</evidence>
<evidence type="ECO:0007744" key="21">
    <source>
    </source>
</evidence>
<evidence type="ECO:0007829" key="22">
    <source>
        <dbReference type="PDB" id="2DOA"/>
    </source>
</evidence>
<sequence length="621" mass="68265">MAALKEDRSYGLSCGRVSDGSKVSVFHVKLTDSALRAFESYRARQDSVSLRPSIRFQGSQGHISIPQPDCPAEARTFSFYLSNIGRDNPQGSFDCIQQYVSSHGEVHLDCLGSIQDKITVCATDDSYQKARQSMAQAEEETRSRSAIVIKAGGRYLGKKVQFRKPAPGATDAVPSRKRATPINLASAIRKSGASAVSGGSGVSQRPFRDRVLHLLALRPYRKAELLLRLQKDGLTQADKDALDGLLQQVANMSAKDGTCTLQDCMYKDVQKDWPGYSEGDQQLLKRVLVRKLCQPQSTGSLLGDPAASSPPGERGRSASPPQKRLQPPDFIDPLANKKPRISHFTQRAQPAVNGKLGVPNGREALLPTPGPPASTDTLSSSTHLPPRLEPPRAHDPLADVSNDLGHSGRDCEHGEAAAPAPTVRLGLPLLTDCAQPSRPHGSPSRSKPKKKSKKHKDKERAAEDKPRAQLPDCAPATHATPGAPADTPGLNGTCSVSSVPTSTSETPDYLLKYAAISSSEQRQSYKNDFNAEYSEYRDLHARIERITRRFTQLDAQLRQLSQGSEEYETTRGQILQEYRKIKKTNTNYSQEKHRCEYLHSKLAHIKRLIAEYDQRQLQAWP</sequence>
<gene>
    <name type="primary">ELL</name>
    <name type="synonym">C19orf17</name>
</gene>
<protein>
    <recommendedName>
        <fullName>RNA polymerase II elongation factor ELL</fullName>
    </recommendedName>
    <alternativeName>
        <fullName>Eleven-nineteen lysine-rich leukemia protein</fullName>
    </alternativeName>
</protein>
<dbReference type="EMBL" id="U16282">
    <property type="protein sequence ID" value="AAA57120.1"/>
    <property type="molecule type" value="mRNA"/>
</dbReference>
<dbReference type="EMBL" id="BC049195">
    <property type="protein sequence ID" value="AAH49195.1"/>
    <property type="molecule type" value="mRNA"/>
</dbReference>
<dbReference type="CCDS" id="CCDS12380.1"/>
<dbReference type="PIR" id="I38880">
    <property type="entry name" value="I38880"/>
</dbReference>
<dbReference type="RefSeq" id="NP_006523.1">
    <property type="nucleotide sequence ID" value="NM_006532.4"/>
</dbReference>
<dbReference type="PDB" id="2DOA">
    <property type="method" value="NMR"/>
    <property type="chains" value="A=200-292"/>
</dbReference>
<dbReference type="PDBsum" id="2DOA"/>
<dbReference type="SMR" id="P55199"/>
<dbReference type="BioGRID" id="113828">
    <property type="interactions" value="93"/>
</dbReference>
<dbReference type="ComplexPortal" id="CPX-2712">
    <property type="entry name" value="Little elongation complex, ELL variant"/>
</dbReference>
<dbReference type="CORUM" id="P55199"/>
<dbReference type="FunCoup" id="P55199">
    <property type="interactions" value="3843"/>
</dbReference>
<dbReference type="IntAct" id="P55199">
    <property type="interactions" value="53"/>
</dbReference>
<dbReference type="MINT" id="P55199"/>
<dbReference type="STRING" id="9606.ENSP00000262809"/>
<dbReference type="GlyGen" id="P55199">
    <property type="glycosylation" value="2 sites, 1 N-linked glycan (1 site)"/>
</dbReference>
<dbReference type="iPTMnet" id="P55199"/>
<dbReference type="PhosphoSitePlus" id="P55199"/>
<dbReference type="BioMuta" id="ELL"/>
<dbReference type="DMDM" id="1706635"/>
<dbReference type="jPOST" id="P55199"/>
<dbReference type="MassIVE" id="P55199"/>
<dbReference type="PaxDb" id="9606-ENSP00000262809"/>
<dbReference type="PeptideAtlas" id="P55199"/>
<dbReference type="ProteomicsDB" id="56805"/>
<dbReference type="Pumba" id="P55199"/>
<dbReference type="Antibodypedia" id="15081">
    <property type="antibodies" value="399 antibodies from 33 providers"/>
</dbReference>
<dbReference type="DNASU" id="8178"/>
<dbReference type="Ensembl" id="ENST00000262809.9">
    <property type="protein sequence ID" value="ENSP00000262809.3"/>
    <property type="gene ID" value="ENSG00000105656.13"/>
</dbReference>
<dbReference type="GeneID" id="8178"/>
<dbReference type="KEGG" id="hsa:8178"/>
<dbReference type="MANE-Select" id="ENST00000262809.9">
    <property type="protein sequence ID" value="ENSP00000262809.3"/>
    <property type="RefSeq nucleotide sequence ID" value="NM_006532.4"/>
    <property type="RefSeq protein sequence ID" value="NP_006523.1"/>
</dbReference>
<dbReference type="UCSC" id="uc002njh.3">
    <property type="organism name" value="human"/>
</dbReference>
<dbReference type="AGR" id="HGNC:23114"/>
<dbReference type="CTD" id="8178"/>
<dbReference type="DisGeNET" id="8178"/>
<dbReference type="GeneCards" id="ELL"/>
<dbReference type="HGNC" id="HGNC:23114">
    <property type="gene designation" value="ELL"/>
</dbReference>
<dbReference type="HPA" id="ENSG00000105656">
    <property type="expression patterns" value="Low tissue specificity"/>
</dbReference>
<dbReference type="MIM" id="600284">
    <property type="type" value="gene"/>
</dbReference>
<dbReference type="neXtProt" id="NX_P55199"/>
<dbReference type="OpenTargets" id="ENSG00000105656"/>
<dbReference type="PharmGKB" id="PA134939610"/>
<dbReference type="VEuPathDB" id="HostDB:ENSG00000105656"/>
<dbReference type="eggNOG" id="KOG4796">
    <property type="taxonomic scope" value="Eukaryota"/>
</dbReference>
<dbReference type="GeneTree" id="ENSGT00940000155914"/>
<dbReference type="HOGENOM" id="CLU_021268_0_0_1"/>
<dbReference type="InParanoid" id="P55199"/>
<dbReference type="OMA" id="QQFQSWH"/>
<dbReference type="OrthoDB" id="6284217at2759"/>
<dbReference type="PAN-GO" id="P55199">
    <property type="GO annotations" value="4 GO annotations based on evolutionary models"/>
</dbReference>
<dbReference type="PhylomeDB" id="P55199"/>
<dbReference type="TreeFam" id="TF326161"/>
<dbReference type="PathwayCommons" id="P55199"/>
<dbReference type="Reactome" id="R-HSA-112382">
    <property type="pathway name" value="Formation of RNA Pol II elongation complex"/>
</dbReference>
<dbReference type="Reactome" id="R-HSA-167152">
    <property type="pathway name" value="Formation of HIV elongation complex in the absence of HIV Tat"/>
</dbReference>
<dbReference type="Reactome" id="R-HSA-167200">
    <property type="pathway name" value="Formation of HIV-1 elongation complex containing HIV-1 Tat"/>
</dbReference>
<dbReference type="Reactome" id="R-HSA-167238">
    <property type="pathway name" value="Pausing and recovery of Tat-mediated HIV elongation"/>
</dbReference>
<dbReference type="Reactome" id="R-HSA-167243">
    <property type="pathway name" value="Tat-mediated HIV elongation arrest and recovery"/>
</dbReference>
<dbReference type="Reactome" id="R-HSA-167246">
    <property type="pathway name" value="Tat-mediated elongation of the HIV-1 transcript"/>
</dbReference>
<dbReference type="Reactome" id="R-HSA-167287">
    <property type="pathway name" value="HIV elongation arrest and recovery"/>
</dbReference>
<dbReference type="Reactome" id="R-HSA-167290">
    <property type="pathway name" value="Pausing and recovery of HIV elongation"/>
</dbReference>
<dbReference type="Reactome" id="R-HSA-674695">
    <property type="pathway name" value="RNA Polymerase II Pre-transcription Events"/>
</dbReference>
<dbReference type="Reactome" id="R-HSA-6781827">
    <property type="pathway name" value="Transcription-Coupled Nucleotide Excision Repair (TC-NER)"/>
</dbReference>
<dbReference type="Reactome" id="R-HSA-6796648">
    <property type="pathway name" value="TP53 Regulates Transcription of DNA Repair Genes"/>
</dbReference>
<dbReference type="Reactome" id="R-HSA-6807505">
    <property type="pathway name" value="RNA polymerase II transcribes snRNA genes"/>
</dbReference>
<dbReference type="Reactome" id="R-HSA-75955">
    <property type="pathway name" value="RNA Polymerase II Transcription Elongation"/>
</dbReference>
<dbReference type="SignaLink" id="P55199"/>
<dbReference type="SIGNOR" id="P55199"/>
<dbReference type="BioGRID-ORCS" id="8178">
    <property type="hits" value="781 hits in 1167 CRISPR screens"/>
</dbReference>
<dbReference type="CD-CODE" id="804901D1">
    <property type="entry name" value="Nuclear speckle"/>
</dbReference>
<dbReference type="ChiTaRS" id="ELL">
    <property type="organism name" value="human"/>
</dbReference>
<dbReference type="EvolutionaryTrace" id="P55199"/>
<dbReference type="GeneWiki" id="ELL_(gene)"/>
<dbReference type="GenomeRNAi" id="8178"/>
<dbReference type="Pharos" id="P55199">
    <property type="development level" value="Tbio"/>
</dbReference>
<dbReference type="PRO" id="PR:P55199"/>
<dbReference type="Proteomes" id="UP000005640">
    <property type="component" value="Chromosome 19"/>
</dbReference>
<dbReference type="RNAct" id="P55199">
    <property type="molecule type" value="protein"/>
</dbReference>
<dbReference type="Bgee" id="ENSG00000105656">
    <property type="expression patterns" value="Expressed in right testis and 110 other cell types or tissues"/>
</dbReference>
<dbReference type="ExpressionAtlas" id="P55199">
    <property type="expression patterns" value="baseline and differential"/>
</dbReference>
<dbReference type="GO" id="GO:0015030">
    <property type="term" value="C:Cajal body"/>
    <property type="evidence" value="ECO:0000314"/>
    <property type="project" value="UniProtKB"/>
</dbReference>
<dbReference type="GO" id="GO:0005829">
    <property type="term" value="C:cytosol"/>
    <property type="evidence" value="ECO:0000314"/>
    <property type="project" value="HPA"/>
</dbReference>
<dbReference type="GO" id="GO:0000791">
    <property type="term" value="C:euchromatin"/>
    <property type="evidence" value="ECO:0000314"/>
    <property type="project" value="UniProtKB"/>
</dbReference>
<dbReference type="GO" id="GO:0035363">
    <property type="term" value="C:histone locus body"/>
    <property type="evidence" value="ECO:0000314"/>
    <property type="project" value="UniProtKB"/>
</dbReference>
<dbReference type="GO" id="GO:0016604">
    <property type="term" value="C:nuclear body"/>
    <property type="evidence" value="ECO:0000314"/>
    <property type="project" value="HPA"/>
</dbReference>
<dbReference type="GO" id="GO:0016607">
    <property type="term" value="C:nuclear speck"/>
    <property type="evidence" value="ECO:0000314"/>
    <property type="project" value="UniProtKB"/>
</dbReference>
<dbReference type="GO" id="GO:0005654">
    <property type="term" value="C:nucleoplasm"/>
    <property type="evidence" value="ECO:0000314"/>
    <property type="project" value="HPA"/>
</dbReference>
<dbReference type="GO" id="GO:0008023">
    <property type="term" value="C:transcription elongation factor complex"/>
    <property type="evidence" value="ECO:0000314"/>
    <property type="project" value="UniProtKB"/>
</dbReference>
<dbReference type="GO" id="GO:0000987">
    <property type="term" value="F:cis-regulatory region sequence-specific DNA binding"/>
    <property type="evidence" value="ECO:0000318"/>
    <property type="project" value="GO_Central"/>
</dbReference>
<dbReference type="GO" id="GO:0019902">
    <property type="term" value="F:phosphatase binding"/>
    <property type="evidence" value="ECO:0000314"/>
    <property type="project" value="UniProtKB"/>
</dbReference>
<dbReference type="GO" id="GO:0001701">
    <property type="term" value="P:in utero embryonic development"/>
    <property type="evidence" value="ECO:0007669"/>
    <property type="project" value="Ensembl"/>
</dbReference>
<dbReference type="GO" id="GO:0032786">
    <property type="term" value="P:positive regulation of DNA-templated transcription, elongation"/>
    <property type="evidence" value="ECO:0000304"/>
    <property type="project" value="ProtInc"/>
</dbReference>
<dbReference type="GO" id="GO:0045945">
    <property type="term" value="P:positive regulation of transcription by RNA polymerase III"/>
    <property type="evidence" value="ECO:0000315"/>
    <property type="project" value="UniProtKB"/>
</dbReference>
<dbReference type="GO" id="GO:0032968">
    <property type="term" value="P:positive regulation of transcription elongation by RNA polymerase II"/>
    <property type="evidence" value="ECO:0000315"/>
    <property type="project" value="UniProtKB"/>
</dbReference>
<dbReference type="GO" id="GO:0042795">
    <property type="term" value="P:snRNA transcription by RNA polymerase II"/>
    <property type="evidence" value="ECO:0000315"/>
    <property type="project" value="UniProtKB"/>
</dbReference>
<dbReference type="GO" id="GO:0042796">
    <property type="term" value="P:snRNA transcription by RNA polymerase III"/>
    <property type="evidence" value="ECO:0000315"/>
    <property type="project" value="UniProtKB"/>
</dbReference>
<dbReference type="GO" id="GO:0006368">
    <property type="term" value="P:transcription elongation by RNA polymerase II"/>
    <property type="evidence" value="ECO:0000304"/>
    <property type="project" value="ProtInc"/>
</dbReference>
<dbReference type="FunFam" id="1.10.10.2670:FF:000002">
    <property type="entry name" value="RNA polymerase II elongation factor ELL2"/>
    <property type="match status" value="1"/>
</dbReference>
<dbReference type="Gene3D" id="6.10.140.340">
    <property type="match status" value="1"/>
</dbReference>
<dbReference type="Gene3D" id="1.10.10.2670">
    <property type="entry name" value="E3 ubiquitin-protein ligase"/>
    <property type="match status" value="1"/>
</dbReference>
<dbReference type="InterPro" id="IPR042065">
    <property type="entry name" value="E3_ELL-like"/>
</dbReference>
<dbReference type="InterPro" id="IPR031176">
    <property type="entry name" value="ELL/occludin"/>
</dbReference>
<dbReference type="InterPro" id="IPR019464">
    <property type="entry name" value="ELL_N"/>
</dbReference>
<dbReference type="InterPro" id="IPR010844">
    <property type="entry name" value="Occludin_ELL"/>
</dbReference>
<dbReference type="InterPro" id="IPR036390">
    <property type="entry name" value="WH_DNA-bd_sf"/>
</dbReference>
<dbReference type="PANTHER" id="PTHR23288">
    <property type="entry name" value="OCCLUDIN AND RNA POLYMERASE II ELONGATION FACTOR ELL"/>
    <property type="match status" value="1"/>
</dbReference>
<dbReference type="PANTHER" id="PTHR23288:SF9">
    <property type="entry name" value="RNA POLYMERASE II ELONGATION FACTOR ELL"/>
    <property type="match status" value="1"/>
</dbReference>
<dbReference type="Pfam" id="PF10390">
    <property type="entry name" value="ELL"/>
    <property type="match status" value="1"/>
</dbReference>
<dbReference type="Pfam" id="PF07303">
    <property type="entry name" value="Occludin_ELL"/>
    <property type="match status" value="1"/>
</dbReference>
<dbReference type="SUPFAM" id="SSF144292">
    <property type="entry name" value="occludin/ELL-like"/>
    <property type="match status" value="1"/>
</dbReference>
<dbReference type="SUPFAM" id="SSF46785">
    <property type="entry name" value="Winged helix' DNA-binding domain"/>
    <property type="match status" value="1"/>
</dbReference>
<dbReference type="PROSITE" id="PS51980">
    <property type="entry name" value="OCEL"/>
    <property type="match status" value="1"/>
</dbReference>
<accession>P55199</accession>
<comment type="function">
    <text evidence="7 8 9 10 11 12 15">Elongation factor component of the super elongation complex (SEC), a complex required to increase the catalytic rate of RNA polymerase II transcription by suppressing transient pausing by the polymerase at multiple sites along the DNA. Elongation factor component of the little elongation complex (LEC), a complex required to regulate small nuclear RNA (snRNA) gene transcription by RNA polymerase II and III (PubMed:22195968, PubMed:23932780). Specifically required for stimulating the elongation step of RNA polymerase II- and III-dependent snRNA gene transcription (PubMed:23932780). ELL also plays an early role before its assembly into in the SEC complex by stabilizing RNA polymerase II recruitment/initiation and entry into the pause site. Required to stabilize the pre-initiation complex and early elongation.</text>
</comment>
<comment type="subunit">
    <text evidence="4 5 8 9 10 12 13">Component of the super elongation complex (SEC), at least composed of EAF1, EAF2, CDK9, MLLT3/AF9, AFF (AFF1 or AFF4), the P-TEFb complex and ELL (ELL, ELL2 or ELL3). Component of the little elongation complex (LEC), at least composed of ELL (ELL, ELL2 or ELL3), ZC3H8, ICE1 and ICE2. Interacts with AFF4; the interaction is direct. Interacts with EAF1 and EAF2. Interacts with ICE1 (via N-terminus domain). Interacts with ICE2. Interacts with USPL1 (PubMed:24413172).</text>
</comment>
<comment type="interaction">
    <interactant intactId="EBI-1245868">
        <id>P55199</id>
    </interactant>
    <interactant intactId="EBI-4322746">
        <id>Q659A1</id>
        <label>ICE2</label>
    </interactant>
    <organismsDiffer>false</organismsDiffer>
    <experiments>5</experiments>
</comment>
<comment type="interaction">
    <interactant intactId="EBI-1245868">
        <id>P55199</id>
    </interactant>
    <interactant intactId="EBI-357253">
        <id>P62136</id>
        <label>PPP1CA</label>
    </interactant>
    <organismsDiffer>false</organismsDiffer>
    <experiments>2</experiments>
</comment>
<comment type="interaction">
    <interactant intactId="EBI-1245868">
        <id>P55199</id>
    </interactant>
    <interactant intactId="EBI-747719">
        <id>Q96H20</id>
        <label>SNF8</label>
    </interactant>
    <organismsDiffer>false</organismsDiffer>
    <experiments>3</experiments>
</comment>
<comment type="subcellular location">
    <subcellularLocation>
        <location evidence="4 5">Nucleus</location>
    </subcellularLocation>
    <subcellularLocation>
        <location evidence="4 5">Nucleus speckle</location>
    </subcellularLocation>
    <subcellularLocation>
        <location evidence="6 10 12">Nucleus</location>
        <location evidence="6 10 12">Cajal body</location>
    </subcellularLocation>
    <text evidence="5 6 12">Colocalizes with EAF2 to nuclear speckles (PubMed:12446457). Colocalizes with coilin in subnuclear cajal and histone locus bodies (PubMed:12686606). Translocates in the LEC complex to cajal and histone locus bodies at snRNA genes in a ICE1-dependent manner. Associates to transcriptionally active chromatin at snRNA genes (PubMed:23932780).</text>
</comment>
<comment type="tissue specificity">
    <text>Expressed in all tissues tested. Highest levels found in placenta, skeletal muscle, testis and peripheral blood leukocytes.</text>
</comment>
<comment type="disease">
    <text evidence="14">A chromosomal aberration involving ELL is found in acute leukemias. Translocation t(11;19)(q23;p13.1) with KMT2A/MLL1. The result is a rogue activator protein.</text>
</comment>
<comment type="similarity">
    <text evidence="16">Belongs to the ELL/occludin family.</text>
</comment>
<comment type="online information" name="Atlas of Genetics and Cytogenetics in Oncology and Haematology">
    <link uri="https://atlasgeneticsoncology.org/gene/10/ELL"/>
</comment>